<organism>
    <name type="scientific">Schizosaccharomyces pombe (strain 972 / ATCC 24843)</name>
    <name type="common">Fission yeast</name>
    <dbReference type="NCBI Taxonomy" id="284812"/>
    <lineage>
        <taxon>Eukaryota</taxon>
        <taxon>Fungi</taxon>
        <taxon>Dikarya</taxon>
        <taxon>Ascomycota</taxon>
        <taxon>Taphrinomycotina</taxon>
        <taxon>Schizosaccharomycetes</taxon>
        <taxon>Schizosaccharomycetales</taxon>
        <taxon>Schizosaccharomycetaceae</taxon>
        <taxon>Schizosaccharomyces</taxon>
    </lineage>
</organism>
<comment type="function">
    <text evidence="3">Functions as a negative regulator of mitosis. It interacts with the C-terminal of nim1, thereby inhibiting its kinase activity which phosphorylates wee1.</text>
</comment>
<comment type="subcellular location">
    <subcellularLocation>
        <location evidence="4">Cytoplasm</location>
    </subcellularLocation>
</comment>
<evidence type="ECO:0000256" key="1">
    <source>
        <dbReference type="SAM" id="MobiDB-lite"/>
    </source>
</evidence>
<evidence type="ECO:0000269" key="2">
    <source>
    </source>
</evidence>
<evidence type="ECO:0000269" key="3">
    <source>
    </source>
</evidence>
<evidence type="ECO:0000305" key="4"/>
<proteinExistence type="evidence at protein level"/>
<reference key="1">
    <citation type="journal article" date="1997" name="EMBO J.">
        <title>Nif1, a novel mitotic inhibitor in Schizosaccharomyces pombe.</title>
        <authorList>
            <person name="Wu L."/>
            <person name="Russell P."/>
        </authorList>
    </citation>
    <scope>NUCLEOTIDE SEQUENCE [GENOMIC DNA]</scope>
    <scope>FUNCTION</scope>
</reference>
<reference key="2">
    <citation type="journal article" date="2002" name="Nature">
        <title>The genome sequence of Schizosaccharomyces pombe.</title>
        <authorList>
            <person name="Wood V."/>
            <person name="Gwilliam R."/>
            <person name="Rajandream M.A."/>
            <person name="Lyne M.H."/>
            <person name="Lyne R."/>
            <person name="Stewart A."/>
            <person name="Sgouros J.G."/>
            <person name="Peat N."/>
            <person name="Hayles J."/>
            <person name="Baker S.G."/>
            <person name="Basham D."/>
            <person name="Bowman S."/>
            <person name="Brooks K."/>
            <person name="Brown D."/>
            <person name="Brown S."/>
            <person name="Chillingworth T."/>
            <person name="Churcher C.M."/>
            <person name="Collins M."/>
            <person name="Connor R."/>
            <person name="Cronin A."/>
            <person name="Davis P."/>
            <person name="Feltwell T."/>
            <person name="Fraser A."/>
            <person name="Gentles S."/>
            <person name="Goble A."/>
            <person name="Hamlin N."/>
            <person name="Harris D.E."/>
            <person name="Hidalgo J."/>
            <person name="Hodgson G."/>
            <person name="Holroyd S."/>
            <person name="Hornsby T."/>
            <person name="Howarth S."/>
            <person name="Huckle E.J."/>
            <person name="Hunt S."/>
            <person name="Jagels K."/>
            <person name="James K.D."/>
            <person name="Jones L."/>
            <person name="Jones M."/>
            <person name="Leather S."/>
            <person name="McDonald S."/>
            <person name="McLean J."/>
            <person name="Mooney P."/>
            <person name="Moule S."/>
            <person name="Mungall K.L."/>
            <person name="Murphy L.D."/>
            <person name="Niblett D."/>
            <person name="Odell C."/>
            <person name="Oliver K."/>
            <person name="O'Neil S."/>
            <person name="Pearson D."/>
            <person name="Quail M.A."/>
            <person name="Rabbinowitsch E."/>
            <person name="Rutherford K.M."/>
            <person name="Rutter S."/>
            <person name="Saunders D."/>
            <person name="Seeger K."/>
            <person name="Sharp S."/>
            <person name="Skelton J."/>
            <person name="Simmonds M.N."/>
            <person name="Squares R."/>
            <person name="Squares S."/>
            <person name="Stevens K."/>
            <person name="Taylor K."/>
            <person name="Taylor R.G."/>
            <person name="Tivey A."/>
            <person name="Walsh S.V."/>
            <person name="Warren T."/>
            <person name="Whitehead S."/>
            <person name="Woodward J.R."/>
            <person name="Volckaert G."/>
            <person name="Aert R."/>
            <person name="Robben J."/>
            <person name="Grymonprez B."/>
            <person name="Weltjens I."/>
            <person name="Vanstreels E."/>
            <person name="Rieger M."/>
            <person name="Schaefer M."/>
            <person name="Mueller-Auer S."/>
            <person name="Gabel C."/>
            <person name="Fuchs M."/>
            <person name="Duesterhoeft A."/>
            <person name="Fritzc C."/>
            <person name="Holzer E."/>
            <person name="Moestl D."/>
            <person name="Hilbert H."/>
            <person name="Borzym K."/>
            <person name="Langer I."/>
            <person name="Beck A."/>
            <person name="Lehrach H."/>
            <person name="Reinhardt R."/>
            <person name="Pohl T.M."/>
            <person name="Eger P."/>
            <person name="Zimmermann W."/>
            <person name="Wedler H."/>
            <person name="Wambutt R."/>
            <person name="Purnelle B."/>
            <person name="Goffeau A."/>
            <person name="Cadieu E."/>
            <person name="Dreano S."/>
            <person name="Gloux S."/>
            <person name="Lelaure V."/>
            <person name="Mottier S."/>
            <person name="Galibert F."/>
            <person name="Aves S.J."/>
            <person name="Xiang Z."/>
            <person name="Hunt C."/>
            <person name="Moore K."/>
            <person name="Hurst S.M."/>
            <person name="Lucas M."/>
            <person name="Rochet M."/>
            <person name="Gaillardin C."/>
            <person name="Tallada V.A."/>
            <person name="Garzon A."/>
            <person name="Thode G."/>
            <person name="Daga R.R."/>
            <person name="Cruzado L."/>
            <person name="Jimenez J."/>
            <person name="Sanchez M."/>
            <person name="del Rey F."/>
            <person name="Benito J."/>
            <person name="Dominguez A."/>
            <person name="Revuelta J.L."/>
            <person name="Moreno S."/>
            <person name="Armstrong J."/>
            <person name="Forsburg S.L."/>
            <person name="Cerutti L."/>
            <person name="Lowe T."/>
            <person name="McCombie W.R."/>
            <person name="Paulsen I."/>
            <person name="Potashkin J."/>
            <person name="Shpakovski G.V."/>
            <person name="Ussery D."/>
            <person name="Barrell B.G."/>
            <person name="Nurse P."/>
        </authorList>
    </citation>
    <scope>NUCLEOTIDE SEQUENCE [LARGE SCALE GENOMIC DNA]</scope>
    <source>
        <strain>972 / ATCC 24843</strain>
    </source>
</reference>
<reference key="3">
    <citation type="journal article" date="2008" name="J. Proteome Res.">
        <title>Phosphoproteome analysis of fission yeast.</title>
        <authorList>
            <person name="Wilson-Grady J.T."/>
            <person name="Villen J."/>
            <person name="Gygi S.P."/>
        </authorList>
    </citation>
    <scope>PHOSPHORYLATION [LARGE SCALE ANALYSIS] AT SER-70 AND SER-196</scope>
    <scope>IDENTIFICATION BY MASS SPECTROMETRY</scope>
</reference>
<protein>
    <recommendedName>
        <fullName>Mitosis inhibitor nif1</fullName>
    </recommendedName>
    <alternativeName>
        <fullName>Nim1-interacting factor 1</fullName>
    </alternativeName>
</protein>
<sequence>METMQSRTYAGLTKLNTTTALLNKKDGNDDDKAEHSKRSGYHGLSPLDALALKHRDLNRKLNLRAMMSKSEDNLQILKETTSGSSSDLLNIESPASPAEASSPFTVRTPTVHDPEHYFVAQKLSSVFGTPDLEDETDFFDYFSAAPDVHPNDIFDSYNSNNIAESFDDDNYYNSLLPPNAPYYHEIEPPRTASNTSPTPNSIKSAHPAEPPKRPAFTRSATSPDKILPTRIKSKDTVSSGDSTPLSGSSSSKGMLMSMSTSENHSLSSNPELSNSNLLAKNESPADVSNNESGNESSKEPDKEHSTPIHPTTPVSRCARPSSRQQTISILQAQSPFLKKSDKERANLNKTMVSINKSINIHQSIHEISCPHHSSSDNCLFILISLMDRLHSPVLKQLDVSLQSLTMTAIRYIDLNYVDVQYTNLRGGAYGNGNNSESSDNAQLKKEEHLNLAIHFHLLNDHDKCFWHTGMASSYEDYTATFIYGLYLRHGLACSPKTHVSFLFLLKTATQLLNKLVECLHSSDLGLNDTTPNEKLSTEYNQQRLLLALILYELGVCFMHGWGITRDRYLALHLIKLSGAWGDADAQFEAGLQMSLGAVSDKDSHMAAYYYRLAGFQGISPPSKCKWVYKSKYSLAANHKVPAASEVAYVSAIVENLESHSLKFSTKPKAKLRSLITSVRYL</sequence>
<name>NIF1_SCHPO</name>
<gene>
    <name type="primary">nif1</name>
    <name type="ORF">SPBC23G7.04c</name>
</gene>
<keyword id="KW-0131">Cell cycle</keyword>
<keyword id="KW-0132">Cell division</keyword>
<keyword id="KW-0963">Cytoplasm</keyword>
<keyword id="KW-0498">Mitosis</keyword>
<keyword id="KW-0597">Phosphoprotein</keyword>
<keyword id="KW-1185">Reference proteome</keyword>
<keyword id="KW-0677">Repeat</keyword>
<dbReference type="EMBL" id="U64574">
    <property type="protein sequence ID" value="AAC49705.1"/>
    <property type="molecule type" value="Genomic_DNA"/>
</dbReference>
<dbReference type="EMBL" id="CU329671">
    <property type="protein sequence ID" value="CAA22620.1"/>
    <property type="molecule type" value="Genomic_DNA"/>
</dbReference>
<dbReference type="PIR" id="T39950">
    <property type="entry name" value="T39950"/>
</dbReference>
<dbReference type="RefSeq" id="NP_595862.1">
    <property type="nucleotide sequence ID" value="NM_001021767.2"/>
</dbReference>
<dbReference type="SMR" id="P87159"/>
<dbReference type="BioGRID" id="276996">
    <property type="interactions" value="8"/>
</dbReference>
<dbReference type="FunCoup" id="P87159">
    <property type="interactions" value="1"/>
</dbReference>
<dbReference type="STRING" id="284812.P87159"/>
<dbReference type="iPTMnet" id="P87159"/>
<dbReference type="PaxDb" id="4896-SPBC23G7.04c.1"/>
<dbReference type="EnsemblFungi" id="SPBC23G7.04c.1">
    <property type="protein sequence ID" value="SPBC23G7.04c.1:pep"/>
    <property type="gene ID" value="SPBC23G7.04c"/>
</dbReference>
<dbReference type="GeneID" id="2540468"/>
<dbReference type="KEGG" id="spo:2540468"/>
<dbReference type="PomBase" id="SPBC23G7.04c">
    <property type="gene designation" value="nif1"/>
</dbReference>
<dbReference type="VEuPathDB" id="FungiDB:SPBC23G7.04c"/>
<dbReference type="HOGENOM" id="CLU_408893_0_0_1"/>
<dbReference type="InParanoid" id="P87159"/>
<dbReference type="OMA" id="CSPKTHV"/>
<dbReference type="PRO" id="PR:P87159"/>
<dbReference type="Proteomes" id="UP000002485">
    <property type="component" value="Chromosome II"/>
</dbReference>
<dbReference type="GO" id="GO:0051285">
    <property type="term" value="C:cell cortex of cell tip"/>
    <property type="evidence" value="ECO:0000314"/>
    <property type="project" value="PomBase"/>
</dbReference>
<dbReference type="GO" id="GO:0032153">
    <property type="term" value="C:cell division site"/>
    <property type="evidence" value="ECO:0000269"/>
    <property type="project" value="PomBase"/>
</dbReference>
<dbReference type="GO" id="GO:0051286">
    <property type="term" value="C:cell tip"/>
    <property type="evidence" value="ECO:0000314"/>
    <property type="project" value="PomBase"/>
</dbReference>
<dbReference type="GO" id="GO:0005829">
    <property type="term" value="C:cytosol"/>
    <property type="evidence" value="ECO:0007005"/>
    <property type="project" value="PomBase"/>
</dbReference>
<dbReference type="GO" id="GO:0004860">
    <property type="term" value="F:protein kinase inhibitor activity"/>
    <property type="evidence" value="ECO:0000315"/>
    <property type="project" value="PomBase"/>
</dbReference>
<dbReference type="GO" id="GO:0051301">
    <property type="term" value="P:cell division"/>
    <property type="evidence" value="ECO:0007669"/>
    <property type="project" value="UniProtKB-KW"/>
</dbReference>
<dbReference type="GO" id="GO:0010972">
    <property type="term" value="P:negative regulation of G2/M transition of mitotic cell cycle"/>
    <property type="evidence" value="ECO:0000315"/>
    <property type="project" value="PomBase"/>
</dbReference>
<dbReference type="GO" id="GO:0023052">
    <property type="term" value="P:signaling"/>
    <property type="evidence" value="ECO:0000305"/>
    <property type="project" value="PomBase"/>
</dbReference>
<dbReference type="Gene3D" id="1.25.40.10">
    <property type="entry name" value="Tetratricopeptide repeat domain"/>
    <property type="match status" value="1"/>
</dbReference>
<dbReference type="InterPro" id="IPR052945">
    <property type="entry name" value="Mitotic_Regulator"/>
</dbReference>
<dbReference type="InterPro" id="IPR006597">
    <property type="entry name" value="Sel1-like"/>
</dbReference>
<dbReference type="InterPro" id="IPR011990">
    <property type="entry name" value="TPR-like_helical_dom_sf"/>
</dbReference>
<dbReference type="PANTHER" id="PTHR43628">
    <property type="entry name" value="ACTIVATOR OF C KINASE PROTEIN 1-RELATED"/>
    <property type="match status" value="1"/>
</dbReference>
<dbReference type="PANTHER" id="PTHR43628:SF1">
    <property type="entry name" value="CHITIN SYNTHASE REGULATORY FACTOR 2-RELATED"/>
    <property type="match status" value="1"/>
</dbReference>
<dbReference type="SMART" id="SM00671">
    <property type="entry name" value="SEL1"/>
    <property type="match status" value="2"/>
</dbReference>
<dbReference type="SUPFAM" id="SSF81901">
    <property type="entry name" value="HCP-like"/>
    <property type="match status" value="1"/>
</dbReference>
<accession>P87159</accession>
<feature type="chain" id="PRO_0000096819" description="Mitosis inhibitor nif1">
    <location>
        <begin position="1"/>
        <end position="681"/>
    </location>
</feature>
<feature type="repeat" description="Sel1-like 1">
    <location>
        <begin position="547"/>
        <end position="582"/>
    </location>
</feature>
<feature type="repeat" description="Sel1-like 2">
    <location>
        <begin position="583"/>
        <end position="618"/>
    </location>
</feature>
<feature type="region of interest" description="Disordered" evidence="1">
    <location>
        <begin position="22"/>
        <end position="43"/>
    </location>
</feature>
<feature type="region of interest" description="Disordered" evidence="1">
    <location>
        <begin position="80"/>
        <end position="104"/>
    </location>
</feature>
<feature type="region of interest" description="Disordered" evidence="1">
    <location>
        <begin position="182"/>
        <end position="324"/>
    </location>
</feature>
<feature type="compositionally biased region" description="Basic and acidic residues" evidence="1">
    <location>
        <begin position="23"/>
        <end position="37"/>
    </location>
</feature>
<feature type="compositionally biased region" description="Low complexity" evidence="1">
    <location>
        <begin position="92"/>
        <end position="103"/>
    </location>
</feature>
<feature type="compositionally biased region" description="Polar residues" evidence="1">
    <location>
        <begin position="191"/>
        <end position="203"/>
    </location>
</feature>
<feature type="compositionally biased region" description="Low complexity" evidence="1">
    <location>
        <begin position="238"/>
        <end position="278"/>
    </location>
</feature>
<feature type="compositionally biased region" description="Basic and acidic residues" evidence="1">
    <location>
        <begin position="296"/>
        <end position="306"/>
    </location>
</feature>
<feature type="modified residue" description="Phosphoserine" evidence="2">
    <location>
        <position position="70"/>
    </location>
</feature>
<feature type="modified residue" description="Phosphoserine" evidence="2">
    <location>
        <position position="196"/>
    </location>
</feature>